<protein>
    <recommendedName>
        <fullName evidence="6">1'-carboxy-chondrochloren decarboxylase</fullName>
        <ecNumber evidence="3">4.1.1.129</ecNumber>
    </recommendedName>
    <alternativeName>
        <fullName evidence="5">Oxidative decarboxylase CndG</fullName>
    </alternativeName>
</protein>
<gene>
    <name evidence="4" type="primary">cndG</name>
    <name evidence="8" type="ORF">CMC5_053350</name>
</gene>
<accession>B9ZUK6</accession>
<proteinExistence type="evidence at protein level"/>
<name>CNDG_CHOCO</name>
<keyword id="KW-0045">Antibiotic biosynthesis</keyword>
<keyword id="KW-0274">FAD</keyword>
<keyword id="KW-0285">Flavoprotein</keyword>
<keyword id="KW-0456">Lyase</keyword>
<keyword id="KW-1185">Reference proteome</keyword>
<evidence type="ECO:0000255" key="1">
    <source>
        <dbReference type="PROSITE-ProRule" id="PRU00718"/>
    </source>
</evidence>
<evidence type="ECO:0000269" key="2">
    <source>
    </source>
</evidence>
<evidence type="ECO:0000269" key="3">
    <source>
    </source>
</evidence>
<evidence type="ECO:0000303" key="4">
    <source>
    </source>
</evidence>
<evidence type="ECO:0000303" key="5">
    <source>
    </source>
</evidence>
<evidence type="ECO:0000305" key="6"/>
<evidence type="ECO:0000305" key="7">
    <source>
    </source>
</evidence>
<evidence type="ECO:0000312" key="8">
    <source>
        <dbReference type="EMBL" id="AKT41174.1"/>
    </source>
</evidence>
<evidence type="ECO:0000312" key="9">
    <source>
        <dbReference type="EMBL" id="CAQ43085.1"/>
    </source>
</evidence>
<reference evidence="9" key="1">
    <citation type="journal article" date="2009" name="Chem. Biol.">
        <title>Unusual chemistry in the biosynthesis of the antibiotic chondrochlorens.</title>
        <authorList>
            <person name="Rachid S."/>
            <person name="Scharfe M."/>
            <person name="Bloecker H."/>
            <person name="Weissman K.J."/>
            <person name="Mueller R."/>
        </authorList>
    </citation>
    <scope>NUCLEOTIDE SEQUENCE [GENOMIC DNA]</scope>
    <scope>GENE CLUSTER</scope>
    <scope>PATHWAY</scope>
    <source>
        <strain>DSM 14714 / JCM 12616 / Cm c5</strain>
    </source>
</reference>
<reference evidence="8" key="2">
    <citation type="journal article" date="2016" name="Appl. Environ. Microbiol.">
        <title>Genome Analysis of the Fruiting Body-Forming Myxobacterium Chondromyces crocatus Reveals High Potential for Natural Product Biosynthesis.</title>
        <authorList>
            <person name="Zaburannyi N."/>
            <person name="Bunk B."/>
            <person name="Maier J."/>
            <person name="Overmann J."/>
            <person name="Mueller R."/>
        </authorList>
    </citation>
    <scope>NUCLEOTIDE SEQUENCE [LARGE SCALE GENOMIC DNA]</scope>
    <source>
        <strain>DSM 14714 / JCM 12616 / Cm c5</strain>
    </source>
</reference>
<reference key="3">
    <citation type="journal article" date="2010" name="J. Biol. Chem.">
        <title>Characterization of a novel type of oxidative decarboxylase involved in the biosynthesis of the styryl moiety of chondrochloren from an acylated tyrosine.</title>
        <authorList>
            <person name="Rachid S."/>
            <person name="Revermann O."/>
            <person name="Dauth C."/>
            <person name="Kazmaier U."/>
            <person name="Mueller R."/>
        </authorList>
    </citation>
    <scope>FUNCTION</scope>
    <scope>CATALYTIC ACTIVITY</scope>
    <scope>ACTIVITY REGULATION</scope>
    <scope>BIOPHYSICOCHEMICAL PROPERTIES</scope>
    <scope>PATHWAY</scope>
    <scope>MASS SPECTROMETRY</scope>
    <scope>DISRUPTION PHENOTYPE</scope>
    <source>
        <strain>DSM 14714 / JCM 12616 / Cm c5</strain>
    </source>
</reference>
<sequence length="541" mass="59376">MNTQPLERALAAFREVLGTAHVSTDESARAAAETATFATTHRIPAIISPGSAAEVEACVRIAREHGVPLYPVSTGKNWGYGSRVPTSDGAIVLSLARMNRILDFNEELAYVAIEPGVTMRQLVAYLNDRGSRLMLSVTGSTPDSSVVGNICDRGFGAGVNAERIAHICNIEVVLPNGERLNTGFGRFPGAQTASIHRWGIGPQLDGLFTQSNLGIVTRMTIWLAPRPRHHEIFYFRLRDERRVEAVTDIIRDLKLQGLPRASVSLWNDYKLVSMKGQYPWQEAAGKTPLPEALLAKLRRAWGGAAWLGGGAILAASQDQIAAERAVIRKALHPHVDKLSFVGQRAARVARLLQRPVQRLTGFDLSEVVRAYEQSPHLGIPMERNIRSAYWRKKAPPPEQTDPDRDRCGAIWLAPAVPSTGKHVGTALRIVRERALAHAFEPGISVIFATERCANIVVALMYDRELPGEDGRAMACYQDIFDRLAAQGYLPYRLGIQSQSALPAAQSSYGTVVGALKRALDPDDILAPGRYDFRHEWPPADN</sequence>
<organism>
    <name type="scientific">Chondromyces crocatus</name>
    <dbReference type="NCBI Taxonomy" id="52"/>
    <lineage>
        <taxon>Bacteria</taxon>
        <taxon>Pseudomonadati</taxon>
        <taxon>Myxococcota</taxon>
        <taxon>Polyangia</taxon>
        <taxon>Polyangiales</taxon>
        <taxon>Polyangiaceae</taxon>
        <taxon>Chondromyces</taxon>
    </lineage>
</organism>
<feature type="chain" id="PRO_0000461654" description="1'-carboxy-chondrochloren decarboxylase">
    <location>
        <begin position="1"/>
        <end position="541"/>
    </location>
</feature>
<feature type="domain" description="FAD-binding PCMH-type" evidence="1">
    <location>
        <begin position="39"/>
        <end position="226"/>
    </location>
</feature>
<dbReference type="EC" id="4.1.1.129" evidence="3"/>
<dbReference type="EMBL" id="AM988861">
    <property type="protein sequence ID" value="CAQ43085.1"/>
    <property type="molecule type" value="Genomic_DNA"/>
</dbReference>
<dbReference type="EMBL" id="CP012159">
    <property type="protein sequence ID" value="AKT41174.1"/>
    <property type="molecule type" value="Genomic_DNA"/>
</dbReference>
<dbReference type="RefSeq" id="WP_050432989.1">
    <property type="nucleotide sequence ID" value="NZ_CP012159.1"/>
</dbReference>
<dbReference type="STRING" id="52.CMC5_053350"/>
<dbReference type="KEGG" id="ccro:CMC5_053350"/>
<dbReference type="PATRIC" id="fig|52.7.peg.5911"/>
<dbReference type="OrthoDB" id="9811557at2"/>
<dbReference type="BioCyc" id="MetaCyc:MONOMER-19496"/>
<dbReference type="Proteomes" id="UP000067626">
    <property type="component" value="Chromosome"/>
</dbReference>
<dbReference type="GO" id="GO:0004458">
    <property type="term" value="F:D-lactate dehydrogenase (cytochrome) activity"/>
    <property type="evidence" value="ECO:0007669"/>
    <property type="project" value="TreeGrafter"/>
</dbReference>
<dbReference type="GO" id="GO:0008720">
    <property type="term" value="F:D-lactate dehydrogenase activity"/>
    <property type="evidence" value="ECO:0007669"/>
    <property type="project" value="TreeGrafter"/>
</dbReference>
<dbReference type="GO" id="GO:0071949">
    <property type="term" value="F:FAD binding"/>
    <property type="evidence" value="ECO:0007669"/>
    <property type="project" value="InterPro"/>
</dbReference>
<dbReference type="GO" id="GO:0016829">
    <property type="term" value="F:lyase activity"/>
    <property type="evidence" value="ECO:0007669"/>
    <property type="project" value="UniProtKB-KW"/>
</dbReference>
<dbReference type="GO" id="GO:0017000">
    <property type="term" value="P:antibiotic biosynthetic process"/>
    <property type="evidence" value="ECO:0007669"/>
    <property type="project" value="UniProtKB-KW"/>
</dbReference>
<dbReference type="GO" id="GO:1903457">
    <property type="term" value="P:lactate catabolic process"/>
    <property type="evidence" value="ECO:0007669"/>
    <property type="project" value="TreeGrafter"/>
</dbReference>
<dbReference type="Gene3D" id="3.30.465.10">
    <property type="match status" value="1"/>
</dbReference>
<dbReference type="Gene3D" id="3.40.462.10">
    <property type="entry name" value="FAD-linked oxidases, C-terminal domain"/>
    <property type="match status" value="1"/>
</dbReference>
<dbReference type="Gene3D" id="3.30.43.10">
    <property type="entry name" value="Uridine Diphospho-n-acetylenolpyruvylglucosamine Reductase, domain 2"/>
    <property type="match status" value="1"/>
</dbReference>
<dbReference type="InterPro" id="IPR016170">
    <property type="entry name" value="Cytok_DH_C_sf"/>
</dbReference>
<dbReference type="InterPro" id="IPR016166">
    <property type="entry name" value="FAD-bd_PCMH"/>
</dbReference>
<dbReference type="InterPro" id="IPR036318">
    <property type="entry name" value="FAD-bd_PCMH-like_sf"/>
</dbReference>
<dbReference type="InterPro" id="IPR016167">
    <property type="entry name" value="FAD-bd_PCMH_sub1"/>
</dbReference>
<dbReference type="InterPro" id="IPR016169">
    <property type="entry name" value="FAD-bd_PCMH_sub2"/>
</dbReference>
<dbReference type="InterPro" id="IPR016164">
    <property type="entry name" value="FAD-linked_Oxase-like_C"/>
</dbReference>
<dbReference type="InterPro" id="IPR006094">
    <property type="entry name" value="Oxid_FAD_bind_N"/>
</dbReference>
<dbReference type="PANTHER" id="PTHR11748:SF114">
    <property type="entry name" value="ARYL-ALCOHOL OXIDASE VANILLYL-ALCOHOL OXIDASE (AFU_ORTHOLOGUE AFUA_3G09500)-RELATED"/>
    <property type="match status" value="1"/>
</dbReference>
<dbReference type="PANTHER" id="PTHR11748">
    <property type="entry name" value="D-LACTATE DEHYDROGENASE"/>
    <property type="match status" value="1"/>
</dbReference>
<dbReference type="Pfam" id="PF01565">
    <property type="entry name" value="FAD_binding_4"/>
    <property type="match status" value="1"/>
</dbReference>
<dbReference type="SUPFAM" id="SSF56176">
    <property type="entry name" value="FAD-binding/transporter-associated domain-like"/>
    <property type="match status" value="1"/>
</dbReference>
<dbReference type="SUPFAM" id="SSF55103">
    <property type="entry name" value="FAD-linked oxidases, C-terminal domain"/>
    <property type="match status" value="1"/>
</dbReference>
<dbReference type="PROSITE" id="PS51387">
    <property type="entry name" value="FAD_PCMH"/>
    <property type="match status" value="1"/>
</dbReference>
<comment type="function">
    <text evidence="3">Oxidative decarboxylase involved in the biosynthesis of the antibiotics chondrochloren A and chondrochloren B (PubMed:20080978). Catalyzes the decarboxylation of biologically inactive pre-chondrochloren A and pre-chondrochloren B to yield mature chondrochloren A and chondrochloren B, respectively (PubMed:20080978). Cannot decarboxylate free L-tyrosine, 3-chloro-tyrosine or a number of chlorinated and non-chlorinated analog substrates containing variable N-acyl chains (PubMed:20080978).</text>
</comment>
<comment type="catalytic activity">
    <reaction evidence="3">
        <text>1'-carboxy-chondrochloren A + FAD + 2 H(+) = chondrochloren A + FADH2 + CO2</text>
        <dbReference type="Rhea" id="RHEA:81491"/>
        <dbReference type="ChEBI" id="CHEBI:15378"/>
        <dbReference type="ChEBI" id="CHEBI:16526"/>
        <dbReference type="ChEBI" id="CHEBI:57692"/>
        <dbReference type="ChEBI" id="CHEBI:58307"/>
        <dbReference type="ChEBI" id="CHEBI:132426"/>
        <dbReference type="ChEBI" id="CHEBI:231889"/>
        <dbReference type="EC" id="4.1.1.129"/>
    </reaction>
    <physiologicalReaction direction="left-to-right" evidence="3">
        <dbReference type="Rhea" id="RHEA:81492"/>
    </physiologicalReaction>
</comment>
<comment type="catalytic activity">
    <reaction evidence="3">
        <text>1'-carboxy-chondrochloren B + FAD + 2 H(+) = chondrochloren B + FADH2 + CO2</text>
        <dbReference type="Rhea" id="RHEA:81495"/>
        <dbReference type="ChEBI" id="CHEBI:15378"/>
        <dbReference type="ChEBI" id="CHEBI:16526"/>
        <dbReference type="ChEBI" id="CHEBI:57692"/>
        <dbReference type="ChEBI" id="CHEBI:58307"/>
        <dbReference type="ChEBI" id="CHEBI:132442"/>
        <dbReference type="ChEBI" id="CHEBI:231890"/>
        <dbReference type="EC" id="4.1.1.129"/>
    </reaction>
    <physiologicalReaction direction="left-to-right" evidence="3">
        <dbReference type="Rhea" id="RHEA:81496"/>
    </physiologicalReaction>
</comment>
<comment type="activity regulation">
    <text evidence="3">Activity is not affected by the addition of EDTA or/and EGTA chelators or in the presence of external metals like Zn(2+), Mg(2+), Mn(2+) and Fe(2+) (PubMed:20080978). Activity is inhibited under low oxygen conditions (PubMed:20080978).</text>
</comment>
<comment type="biophysicochemical properties">
    <kinetics>
        <KM evidence="3">21.5 uM for pre-chondrochloren B</KM>
        <text evidence="3">kcat is 15.5 min(-1) with pre-chondrochloren B as substrate.</text>
    </kinetics>
</comment>
<comment type="pathway">
    <text evidence="3 7">Antibiotic biosynthesis.</text>
</comment>
<comment type="induction">
    <text evidence="2">Encoded within the chondrochloren biosynthetic gene cluster.</text>
</comment>
<comment type="mass spectrometry" mass="60157.0" method="MALDI" evidence="3"/>
<comment type="disruption phenotype">
    <text evidence="3">Inactivation of the gene results in the accumulation of carboxylated chondrochlorens A and B (pre-chondrochlorens) and abolishment of chondrochloren production.</text>
</comment>